<keyword id="KW-0010">Activator</keyword>
<keyword id="KW-0025">Alternative splicing</keyword>
<keyword id="KW-0217">Developmental protein</keyword>
<keyword id="KW-0221">Differentiation</keyword>
<keyword id="KW-0469">Meiosis</keyword>
<keyword id="KW-0479">Metal-binding</keyword>
<keyword id="KW-0539">Nucleus</keyword>
<keyword id="KW-1267">Proteomics identification</keyword>
<keyword id="KW-1185">Reference proteome</keyword>
<keyword id="KW-0677">Repeat</keyword>
<keyword id="KW-0678">Repressor</keyword>
<keyword id="KW-0744">Spermatogenesis</keyword>
<keyword id="KW-0804">Transcription</keyword>
<keyword id="KW-0805">Transcription regulation</keyword>
<keyword id="KW-0862">Zinc</keyword>
<keyword id="KW-0863">Zinc-finger</keyword>
<dbReference type="EMBL" id="AC010331">
    <property type="status" value="NOT_ANNOTATED_CDS"/>
    <property type="molecule type" value="Genomic_DNA"/>
</dbReference>
<dbReference type="EMBL" id="AC016589">
    <property type="status" value="NOT_ANNOTATED_CDS"/>
    <property type="molecule type" value="Genomic_DNA"/>
</dbReference>
<dbReference type="EMBL" id="AC073548">
    <property type="status" value="NOT_ANNOTATED_CDS"/>
    <property type="molecule type" value="Genomic_DNA"/>
</dbReference>
<dbReference type="EMBL" id="AL136846">
    <property type="protein sequence ID" value="CAB66780.1"/>
    <property type="status" value="ALT_INIT"/>
    <property type="molecule type" value="mRNA"/>
</dbReference>
<dbReference type="EMBL" id="AL833862">
    <property type="protein sequence ID" value="CAD38720.2"/>
    <property type="status" value="ALT_FRAME"/>
    <property type="molecule type" value="mRNA"/>
</dbReference>
<dbReference type="EMBL" id="BC101050">
    <property type="protein sequence ID" value="AAI01051.1"/>
    <property type="status" value="ALT_INIT"/>
    <property type="molecule type" value="mRNA"/>
</dbReference>
<dbReference type="EMBL" id="BC101051">
    <property type="protein sequence ID" value="AAI01052.1"/>
    <property type="status" value="ALT_INIT"/>
    <property type="molecule type" value="mRNA"/>
</dbReference>
<dbReference type="EMBL" id="BC101052">
    <property type="protein sequence ID" value="AAI01053.1"/>
    <property type="status" value="ALT_INIT"/>
    <property type="molecule type" value="mRNA"/>
</dbReference>
<dbReference type="EMBL" id="BC101053">
    <property type="protein sequence ID" value="AAI01054.1"/>
    <property type="status" value="ALT_INIT"/>
    <property type="molecule type" value="mRNA"/>
</dbReference>
<dbReference type="CCDS" id="CCDS46133.2">
    <molecule id="Q9H0D2-3"/>
</dbReference>
<dbReference type="RefSeq" id="NP_001264004.1">
    <molecule id="Q9H0D2-3"/>
    <property type="nucleotide sequence ID" value="NM_001277075.3"/>
</dbReference>
<dbReference type="RefSeq" id="XP_005259368.1">
    <molecule id="Q9H0D2-3"/>
    <property type="nucleotide sequence ID" value="XM_005259311.6"/>
</dbReference>
<dbReference type="RefSeq" id="XP_047295462.1">
    <molecule id="Q9H0D2-3"/>
    <property type="nucleotide sequence ID" value="XM_047439506.1"/>
</dbReference>
<dbReference type="SMR" id="Q9H0D2"/>
<dbReference type="BioGRID" id="123949">
    <property type="interactions" value="6"/>
</dbReference>
<dbReference type="CORUM" id="Q9H0D2"/>
<dbReference type="FunCoup" id="Q9H0D2">
    <property type="interactions" value="53"/>
</dbReference>
<dbReference type="IntAct" id="Q9H0D2">
    <property type="interactions" value="3"/>
</dbReference>
<dbReference type="STRING" id="9606.ENSP00000375770"/>
<dbReference type="GlyGen" id="Q9H0D2">
    <property type="glycosylation" value="2 sites, 1 O-linked glycan (1 site)"/>
</dbReference>
<dbReference type="iPTMnet" id="Q9H0D2"/>
<dbReference type="PhosphoSitePlus" id="Q9H0D2"/>
<dbReference type="BioMuta" id="ZNF541"/>
<dbReference type="DMDM" id="221222508"/>
<dbReference type="jPOST" id="Q9H0D2"/>
<dbReference type="MassIVE" id="Q9H0D2"/>
<dbReference type="PaxDb" id="9606-ENSP00000375770"/>
<dbReference type="PeptideAtlas" id="Q9H0D2"/>
<dbReference type="ProteomicsDB" id="80255">
    <molecule id="Q9H0D2-3"/>
</dbReference>
<dbReference type="ProteomicsDB" id="80256">
    <molecule id="Q9H0D2-2"/>
</dbReference>
<dbReference type="ProteomicsDB" id="80257">
    <molecule id="Q9H0D2-3"/>
</dbReference>
<dbReference type="Antibodypedia" id="18215">
    <property type="antibodies" value="124 antibodies from 26 providers"/>
</dbReference>
<dbReference type="DNASU" id="84215"/>
<dbReference type="Ensembl" id="ENST00000391901.8">
    <molecule id="Q9H0D2-3"/>
    <property type="protein sequence ID" value="ENSP00000375770.3"/>
    <property type="gene ID" value="ENSG00000118156.13"/>
</dbReference>
<dbReference type="GeneID" id="84215"/>
<dbReference type="KEGG" id="hsa:84215"/>
<dbReference type="MANE-Select" id="ENST00000391901.8">
    <property type="protein sequence ID" value="ENSP00000375770.3"/>
    <property type="RefSeq nucleotide sequence ID" value="NM_001277075.3"/>
    <property type="RefSeq protein sequence ID" value="NP_001264004.1"/>
</dbReference>
<dbReference type="UCSC" id="uc002phg.5">
    <molecule id="Q9H0D2-3"/>
    <property type="organism name" value="human"/>
</dbReference>
<dbReference type="AGR" id="HGNC:25294"/>
<dbReference type="CTD" id="84215"/>
<dbReference type="DisGeNET" id="84215"/>
<dbReference type="GeneCards" id="ZNF541"/>
<dbReference type="HGNC" id="HGNC:25294">
    <property type="gene designation" value="ZNF541"/>
</dbReference>
<dbReference type="HPA" id="ENSG00000118156">
    <property type="expression patterns" value="Tissue enriched (testis)"/>
</dbReference>
<dbReference type="MIM" id="619942">
    <property type="type" value="gene"/>
</dbReference>
<dbReference type="neXtProt" id="NX_Q9H0D2"/>
<dbReference type="OpenTargets" id="ENSG00000118156"/>
<dbReference type="PharmGKB" id="PA134941115"/>
<dbReference type="VEuPathDB" id="HostDB:ENSG00000118156"/>
<dbReference type="eggNOG" id="KOG1721">
    <property type="taxonomic scope" value="Eukaryota"/>
</dbReference>
<dbReference type="eggNOG" id="KOG4167">
    <property type="taxonomic scope" value="Eukaryota"/>
</dbReference>
<dbReference type="GeneTree" id="ENSGT00940000160330"/>
<dbReference type="HOGENOM" id="CLU_006052_0_0_1"/>
<dbReference type="InParanoid" id="Q9H0D2"/>
<dbReference type="OMA" id="FAYDCPD"/>
<dbReference type="OrthoDB" id="10258692at2759"/>
<dbReference type="PAN-GO" id="Q9H0D2">
    <property type="GO annotations" value="6 GO annotations based on evolutionary models"/>
</dbReference>
<dbReference type="TreeFam" id="TF106431"/>
<dbReference type="PathwayCommons" id="Q9H0D2"/>
<dbReference type="SignaLink" id="Q9H0D2"/>
<dbReference type="BioGRID-ORCS" id="84215">
    <property type="hits" value="22 hits in 1169 CRISPR screens"/>
</dbReference>
<dbReference type="ChiTaRS" id="ZNF541">
    <property type="organism name" value="human"/>
</dbReference>
<dbReference type="GenomeRNAi" id="84215"/>
<dbReference type="Pharos" id="Q9H0D2">
    <property type="development level" value="Tdark"/>
</dbReference>
<dbReference type="PRO" id="PR:Q9H0D2"/>
<dbReference type="Proteomes" id="UP000005640">
    <property type="component" value="Chromosome 19"/>
</dbReference>
<dbReference type="RNAct" id="Q9H0D2">
    <property type="molecule type" value="protein"/>
</dbReference>
<dbReference type="Bgee" id="ENSG00000118156">
    <property type="expression patterns" value="Expressed in left testis and 103 other cell types or tissues"/>
</dbReference>
<dbReference type="ExpressionAtlas" id="Q9H0D2">
    <property type="expression patterns" value="baseline and differential"/>
</dbReference>
<dbReference type="GO" id="GO:0000118">
    <property type="term" value="C:histone deacetylase complex"/>
    <property type="evidence" value="ECO:0000250"/>
    <property type="project" value="UniProtKB"/>
</dbReference>
<dbReference type="GO" id="GO:0005634">
    <property type="term" value="C:nucleus"/>
    <property type="evidence" value="ECO:0000250"/>
    <property type="project" value="UniProtKB"/>
</dbReference>
<dbReference type="GO" id="GO:0005667">
    <property type="term" value="C:transcription regulator complex"/>
    <property type="evidence" value="ECO:0000318"/>
    <property type="project" value="GO_Central"/>
</dbReference>
<dbReference type="GO" id="GO:0003714">
    <property type="term" value="F:transcription corepressor activity"/>
    <property type="evidence" value="ECO:0000318"/>
    <property type="project" value="GO_Central"/>
</dbReference>
<dbReference type="GO" id="GO:0008270">
    <property type="term" value="F:zinc ion binding"/>
    <property type="evidence" value="ECO:0007669"/>
    <property type="project" value="UniProtKB-KW"/>
</dbReference>
<dbReference type="GO" id="GO:0030154">
    <property type="term" value="P:cell differentiation"/>
    <property type="evidence" value="ECO:0007669"/>
    <property type="project" value="UniProtKB-KW"/>
</dbReference>
<dbReference type="GO" id="GO:0007140">
    <property type="term" value="P:male meiotic nuclear division"/>
    <property type="evidence" value="ECO:0000250"/>
    <property type="project" value="UniProtKB"/>
</dbReference>
<dbReference type="GO" id="GO:0045892">
    <property type="term" value="P:negative regulation of DNA-templated transcription"/>
    <property type="evidence" value="ECO:0000250"/>
    <property type="project" value="UniProtKB"/>
</dbReference>
<dbReference type="GO" id="GO:0045893">
    <property type="term" value="P:positive regulation of DNA-templated transcription"/>
    <property type="evidence" value="ECO:0000250"/>
    <property type="project" value="UniProtKB"/>
</dbReference>
<dbReference type="GO" id="GO:0006355">
    <property type="term" value="P:regulation of DNA-templated transcription"/>
    <property type="evidence" value="ECO:0000250"/>
    <property type="project" value="UniProtKB"/>
</dbReference>
<dbReference type="GO" id="GO:0006357">
    <property type="term" value="P:regulation of transcription by RNA polymerase II"/>
    <property type="evidence" value="ECO:0000318"/>
    <property type="project" value="GO_Central"/>
</dbReference>
<dbReference type="GO" id="GO:0007283">
    <property type="term" value="P:spermatogenesis"/>
    <property type="evidence" value="ECO:0007669"/>
    <property type="project" value="UniProtKB-KW"/>
</dbReference>
<dbReference type="FunFam" id="3.30.160.60:FF:004357">
    <property type="match status" value="1"/>
</dbReference>
<dbReference type="FunFam" id="1.10.10.60:FF:000251">
    <property type="entry name" value="Zinc finger protein 541"/>
    <property type="match status" value="1"/>
</dbReference>
<dbReference type="FunFam" id="3.30.160.60:FF:000656">
    <property type="entry name" value="Zinc finger protein 541"/>
    <property type="match status" value="1"/>
</dbReference>
<dbReference type="Gene3D" id="3.30.160.60">
    <property type="entry name" value="Classic Zinc Finger"/>
    <property type="match status" value="3"/>
</dbReference>
<dbReference type="Gene3D" id="1.10.10.60">
    <property type="entry name" value="Homeodomain-like"/>
    <property type="match status" value="1"/>
</dbReference>
<dbReference type="InterPro" id="IPR000949">
    <property type="entry name" value="ELM2_dom"/>
</dbReference>
<dbReference type="InterPro" id="IPR009057">
    <property type="entry name" value="Homeodomain-like_sf"/>
</dbReference>
<dbReference type="InterPro" id="IPR001005">
    <property type="entry name" value="SANT/Myb"/>
</dbReference>
<dbReference type="InterPro" id="IPR017884">
    <property type="entry name" value="SANT_dom"/>
</dbReference>
<dbReference type="InterPro" id="IPR051066">
    <property type="entry name" value="Trans_reg/Corepressor"/>
</dbReference>
<dbReference type="InterPro" id="IPR036236">
    <property type="entry name" value="Znf_C2H2_sf"/>
</dbReference>
<dbReference type="InterPro" id="IPR013087">
    <property type="entry name" value="Znf_C2H2_type"/>
</dbReference>
<dbReference type="PANTHER" id="PTHR16089">
    <property type="entry name" value="REST COREPRESSOR COREST PROTEIN-RELATED"/>
    <property type="match status" value="1"/>
</dbReference>
<dbReference type="PANTHER" id="PTHR16089:SF23">
    <property type="entry name" value="ZINC FINGER PROTEIN 541"/>
    <property type="match status" value="1"/>
</dbReference>
<dbReference type="Pfam" id="PF01448">
    <property type="entry name" value="ELM2"/>
    <property type="match status" value="1"/>
</dbReference>
<dbReference type="Pfam" id="PF00096">
    <property type="entry name" value="zf-C2H2"/>
    <property type="match status" value="1"/>
</dbReference>
<dbReference type="Pfam" id="PF13912">
    <property type="entry name" value="zf-C2H2_6"/>
    <property type="match status" value="2"/>
</dbReference>
<dbReference type="SMART" id="SM01189">
    <property type="entry name" value="ELM2"/>
    <property type="match status" value="1"/>
</dbReference>
<dbReference type="SMART" id="SM00717">
    <property type="entry name" value="SANT"/>
    <property type="match status" value="1"/>
</dbReference>
<dbReference type="SMART" id="SM00355">
    <property type="entry name" value="ZnF_C2H2"/>
    <property type="match status" value="5"/>
</dbReference>
<dbReference type="SUPFAM" id="SSF57667">
    <property type="entry name" value="beta-beta-alpha zinc fingers"/>
    <property type="match status" value="2"/>
</dbReference>
<dbReference type="SUPFAM" id="SSF46689">
    <property type="entry name" value="Homeodomain-like"/>
    <property type="match status" value="1"/>
</dbReference>
<dbReference type="PROSITE" id="PS51156">
    <property type="entry name" value="ELM2"/>
    <property type="match status" value="1"/>
</dbReference>
<dbReference type="PROSITE" id="PS51293">
    <property type="entry name" value="SANT"/>
    <property type="match status" value="1"/>
</dbReference>
<dbReference type="PROSITE" id="PS00028">
    <property type="entry name" value="ZINC_FINGER_C2H2_1"/>
    <property type="match status" value="5"/>
</dbReference>
<dbReference type="PROSITE" id="PS50157">
    <property type="entry name" value="ZINC_FINGER_C2H2_2"/>
    <property type="match status" value="5"/>
</dbReference>
<accession>Q9H0D2</accession>
<accession>Q8NDK8</accession>
<organism>
    <name type="scientific">Homo sapiens</name>
    <name type="common">Human</name>
    <dbReference type="NCBI Taxonomy" id="9606"/>
    <lineage>
        <taxon>Eukaryota</taxon>
        <taxon>Metazoa</taxon>
        <taxon>Chordata</taxon>
        <taxon>Craniata</taxon>
        <taxon>Vertebrata</taxon>
        <taxon>Euteleostomi</taxon>
        <taxon>Mammalia</taxon>
        <taxon>Eutheria</taxon>
        <taxon>Euarchontoglires</taxon>
        <taxon>Primates</taxon>
        <taxon>Haplorrhini</taxon>
        <taxon>Catarrhini</taxon>
        <taxon>Hominidae</taxon>
        <taxon>Homo</taxon>
    </lineage>
</organism>
<protein>
    <recommendedName>
        <fullName>Zinc finger protein 541</fullName>
    </recommendedName>
</protein>
<reference key="1">
    <citation type="journal article" date="2004" name="Nature">
        <title>The DNA sequence and biology of human chromosome 19.</title>
        <authorList>
            <person name="Grimwood J."/>
            <person name="Gordon L.A."/>
            <person name="Olsen A.S."/>
            <person name="Terry A."/>
            <person name="Schmutz J."/>
            <person name="Lamerdin J.E."/>
            <person name="Hellsten U."/>
            <person name="Goodstein D."/>
            <person name="Couronne O."/>
            <person name="Tran-Gyamfi M."/>
            <person name="Aerts A."/>
            <person name="Altherr M."/>
            <person name="Ashworth L."/>
            <person name="Bajorek E."/>
            <person name="Black S."/>
            <person name="Branscomb E."/>
            <person name="Caenepeel S."/>
            <person name="Carrano A.V."/>
            <person name="Caoile C."/>
            <person name="Chan Y.M."/>
            <person name="Christensen M."/>
            <person name="Cleland C.A."/>
            <person name="Copeland A."/>
            <person name="Dalin E."/>
            <person name="Dehal P."/>
            <person name="Denys M."/>
            <person name="Detter J.C."/>
            <person name="Escobar J."/>
            <person name="Flowers D."/>
            <person name="Fotopulos D."/>
            <person name="Garcia C."/>
            <person name="Georgescu A.M."/>
            <person name="Glavina T."/>
            <person name="Gomez M."/>
            <person name="Gonzales E."/>
            <person name="Groza M."/>
            <person name="Hammon N."/>
            <person name="Hawkins T."/>
            <person name="Haydu L."/>
            <person name="Ho I."/>
            <person name="Huang W."/>
            <person name="Israni S."/>
            <person name="Jett J."/>
            <person name="Kadner K."/>
            <person name="Kimball H."/>
            <person name="Kobayashi A."/>
            <person name="Larionov V."/>
            <person name="Leem S.-H."/>
            <person name="Lopez F."/>
            <person name="Lou Y."/>
            <person name="Lowry S."/>
            <person name="Malfatti S."/>
            <person name="Martinez D."/>
            <person name="McCready P.M."/>
            <person name="Medina C."/>
            <person name="Morgan J."/>
            <person name="Nelson K."/>
            <person name="Nolan M."/>
            <person name="Ovcharenko I."/>
            <person name="Pitluck S."/>
            <person name="Pollard M."/>
            <person name="Popkie A.P."/>
            <person name="Predki P."/>
            <person name="Quan G."/>
            <person name="Ramirez L."/>
            <person name="Rash S."/>
            <person name="Retterer J."/>
            <person name="Rodriguez A."/>
            <person name="Rogers S."/>
            <person name="Salamov A."/>
            <person name="Salazar A."/>
            <person name="She X."/>
            <person name="Smith D."/>
            <person name="Slezak T."/>
            <person name="Solovyev V."/>
            <person name="Thayer N."/>
            <person name="Tice H."/>
            <person name="Tsai M."/>
            <person name="Ustaszewska A."/>
            <person name="Vo N."/>
            <person name="Wagner M."/>
            <person name="Wheeler J."/>
            <person name="Wu K."/>
            <person name="Xie G."/>
            <person name="Yang J."/>
            <person name="Dubchak I."/>
            <person name="Furey T.S."/>
            <person name="DeJong P."/>
            <person name="Dickson M."/>
            <person name="Gordon D."/>
            <person name="Eichler E.E."/>
            <person name="Pennacchio L.A."/>
            <person name="Richardson P."/>
            <person name="Stubbs L."/>
            <person name="Rokhsar D.S."/>
            <person name="Myers R.M."/>
            <person name="Rubin E.M."/>
            <person name="Lucas S.M."/>
        </authorList>
    </citation>
    <scope>NUCLEOTIDE SEQUENCE [LARGE SCALE GENOMIC DNA]</scope>
</reference>
<reference key="2">
    <citation type="journal article" date="2001" name="Genome Res.">
        <title>Towards a catalog of human genes and proteins: sequencing and analysis of 500 novel complete protein coding human cDNAs.</title>
        <authorList>
            <person name="Wiemann S."/>
            <person name="Weil B."/>
            <person name="Wellenreuther R."/>
            <person name="Gassenhuber J."/>
            <person name="Glassl S."/>
            <person name="Ansorge W."/>
            <person name="Boecher M."/>
            <person name="Bloecker H."/>
            <person name="Bauersachs S."/>
            <person name="Blum H."/>
            <person name="Lauber J."/>
            <person name="Duesterhoeft A."/>
            <person name="Beyer A."/>
            <person name="Koehrer K."/>
            <person name="Strack N."/>
            <person name="Mewes H.-W."/>
            <person name="Ottenwaelder B."/>
            <person name="Obermaier B."/>
            <person name="Tampe J."/>
            <person name="Heubner D."/>
            <person name="Wambutt R."/>
            <person name="Korn B."/>
            <person name="Klein M."/>
            <person name="Poustka A."/>
        </authorList>
    </citation>
    <scope>NUCLEOTIDE SEQUENCE [LARGE SCALE MRNA] OF 411-1346 (ISOFORM 2)</scope>
    <scope>NUCLEOTIDE SEQUENCE [LARGE SCALE MRNA] OF 545-1346 (ISOFORM 3)</scope>
    <source>
        <tissue>Testis</tissue>
    </source>
</reference>
<reference key="3">
    <citation type="journal article" date="2004" name="Genome Res.">
        <title>The status, quality, and expansion of the NIH full-length cDNA project: the Mammalian Gene Collection (MGC).</title>
        <authorList>
            <consortium name="The MGC Project Team"/>
        </authorList>
    </citation>
    <scope>NUCLEOTIDE SEQUENCE [LARGE SCALE MRNA] OF 546-1346 (ISOFORM 3)</scope>
</reference>
<reference key="4">
    <citation type="journal article" date="2006" name="Science">
        <title>The consensus coding sequences of human breast and colorectal cancers.</title>
        <authorList>
            <person name="Sjoeblom T."/>
            <person name="Jones S."/>
            <person name="Wood L.D."/>
            <person name="Parsons D.W."/>
            <person name="Lin J."/>
            <person name="Barber T.D."/>
            <person name="Mandelker D."/>
            <person name="Leary R.J."/>
            <person name="Ptak J."/>
            <person name="Silliman N."/>
            <person name="Szabo S."/>
            <person name="Buckhaults P."/>
            <person name="Farrell C."/>
            <person name="Meeh P."/>
            <person name="Markowitz S.D."/>
            <person name="Willis J."/>
            <person name="Dawson D."/>
            <person name="Willson J.K.V."/>
            <person name="Gazdar A.F."/>
            <person name="Hartigan J."/>
            <person name="Wu L."/>
            <person name="Liu C."/>
            <person name="Parmigiani G."/>
            <person name="Park B.H."/>
            <person name="Bachman K.E."/>
            <person name="Papadopoulos N."/>
            <person name="Vogelstein B."/>
            <person name="Kinzler K.W."/>
            <person name="Velculescu V.E."/>
        </authorList>
    </citation>
    <scope>VARIANT [LARGE SCALE ANALYSIS] LEU-712</scope>
</reference>
<reference key="5">
    <citation type="journal article" date="2011" name="PLoS Genet.">
        <title>Nuclear cGMP-dependent kinase regulates gene expression via activity-dependent recruitment of a conserved histone deacetylase complex.</title>
        <authorList>
            <person name="Hao Y."/>
            <person name="Xu N."/>
            <person name="Box A.C."/>
            <person name="Schaefer L."/>
            <person name="Kannan K."/>
            <person name="Zhang Y."/>
            <person name="Florens L."/>
            <person name="Seidel C."/>
            <person name="Washburn M.P."/>
            <person name="Wiegraebe W."/>
            <person name="Mak H.Y."/>
        </authorList>
    </citation>
    <scope>IDENTIFICATION IN HISTONE DEACETYLASE COMPLEX</scope>
    <scope>INTERACTION WITH DNTTIP1; HDAC1 AND HDAC2</scope>
</reference>
<name>ZN541_HUMAN</name>
<comment type="function">
    <text evidence="1">Transcription regulator which is essential for male fertility and for the completion of meiotic prophase in spermatocytes. Regulates progression of the pachytene stage of meiotic prophase by activating the expression of genes involved in meiosis during spermatogenesis. Maintains the repression of pre-pachytene transcriptional programs, including meiotic double-strand breaks (DSB) formation genes in pachytene spermatocytes and suppresses aberrant DSB formation after mid-pachytene, thus ensuring meiosis progression.</text>
</comment>
<comment type="subunit">
    <text evidence="1 7">Interacts with DNTTIP1 (PubMed:21573134). Identified in a complex with KCDT19, HDAC1 and HSPA2 (By similarity). Component of a histone deacetylase complex containing DNTTIP1, ZNF541, HDAC1 and HDAC2 (PubMed:21573134). Identified in a complex with HDAC1, HDAC2, DNTTIP1 and KCTD19 (By similarity).</text>
</comment>
<comment type="interaction">
    <interactant intactId="EBI-3957075">
        <id>Q9H0D2</id>
    </interactant>
    <interactant intactId="EBI-949782">
        <id>Q96IF1</id>
        <label>AJUBA</label>
    </interactant>
    <organismsDiffer>false</organismsDiffer>
    <experiments>3</experiments>
</comment>
<comment type="interaction">
    <interactant intactId="EBI-3957075">
        <id>Q9H0D2</id>
    </interactant>
    <interactant intactId="EBI-742327">
        <id>Q15654</id>
        <label>TRIP6</label>
    </interactant>
    <organismsDiffer>false</organismsDiffer>
    <experiments>3</experiments>
</comment>
<comment type="subcellular location">
    <subcellularLocation>
        <location evidence="1 3 4">Nucleus</location>
    </subcellularLocation>
</comment>
<comment type="alternative products">
    <event type="alternative splicing"/>
    <isoform>
        <id>Q9H0D2-3</id>
        <name>3</name>
        <sequence type="displayed"/>
    </isoform>
    <isoform>
        <id>Q9H0D2-2</id>
        <name>2</name>
        <sequence type="described" ref="VSP_016024"/>
    </isoform>
</comment>
<comment type="sequence caution" evidence="9">
    <conflict type="erroneous initiation">
        <sequence resource="EMBL-CDS" id="AAI01051"/>
    </conflict>
    <text>Truncated N-terminus.</text>
</comment>
<comment type="sequence caution" evidence="9">
    <conflict type="erroneous initiation">
        <sequence resource="EMBL-CDS" id="AAI01052"/>
    </conflict>
    <text>Truncated N-terminus.</text>
</comment>
<comment type="sequence caution" evidence="9">
    <conflict type="erroneous initiation">
        <sequence resource="EMBL-CDS" id="AAI01053"/>
    </conflict>
    <text>Truncated N-terminus.</text>
</comment>
<comment type="sequence caution" evidence="9">
    <conflict type="erroneous initiation">
        <sequence resource="EMBL-CDS" id="AAI01054"/>
    </conflict>
    <text>Truncated N-terminus.</text>
</comment>
<comment type="sequence caution" evidence="9">
    <conflict type="erroneous initiation">
        <sequence resource="EMBL-CDS" id="CAB66780"/>
    </conflict>
    <text>Truncated N-terminus.</text>
</comment>
<comment type="sequence caution" evidence="9">
    <conflict type="frameshift">
        <sequence resource="EMBL-CDS" id="CAD38720"/>
    </conflict>
</comment>
<proteinExistence type="evidence at protein level"/>
<feature type="chain" id="PRO_0000197136" description="Zinc finger protein 541">
    <location>
        <begin position="1"/>
        <end position="1346"/>
    </location>
</feature>
<feature type="domain" description="ELM2" evidence="3">
    <location>
        <begin position="1053"/>
        <end position="1145"/>
    </location>
</feature>
<feature type="domain" description="SANT" evidence="4">
    <location>
        <begin position="1160"/>
        <end position="1211"/>
    </location>
</feature>
<feature type="zinc finger region" description="C2H2-type 1" evidence="2">
    <location>
        <begin position="140"/>
        <end position="162"/>
    </location>
</feature>
<feature type="zinc finger region" description="C2H2-type 2" evidence="2">
    <location>
        <begin position="168"/>
        <end position="190"/>
    </location>
</feature>
<feature type="zinc finger region" description="C2H2-type 3" evidence="2">
    <location>
        <begin position="196"/>
        <end position="220"/>
    </location>
</feature>
<feature type="zinc finger region" description="C2H2-type 4" evidence="2">
    <location>
        <begin position="838"/>
        <end position="860"/>
    </location>
</feature>
<feature type="zinc finger region" description="C2H2-type 5" evidence="2">
    <location>
        <begin position="1289"/>
        <end position="1311"/>
    </location>
</feature>
<feature type="region of interest" description="Disordered" evidence="5">
    <location>
        <begin position="1"/>
        <end position="34"/>
    </location>
</feature>
<feature type="region of interest" description="Disordered" evidence="5">
    <location>
        <begin position="113"/>
        <end position="136"/>
    </location>
</feature>
<feature type="region of interest" description="Disordered" evidence="5">
    <location>
        <begin position="235"/>
        <end position="271"/>
    </location>
</feature>
<feature type="region of interest" description="Disordered" evidence="5">
    <location>
        <begin position="283"/>
        <end position="328"/>
    </location>
</feature>
<feature type="region of interest" description="Disordered" evidence="5">
    <location>
        <begin position="437"/>
        <end position="472"/>
    </location>
</feature>
<feature type="region of interest" description="Disordered" evidence="5">
    <location>
        <begin position="578"/>
        <end position="744"/>
    </location>
</feature>
<feature type="region of interest" description="Disordered" evidence="5">
    <location>
        <begin position="931"/>
        <end position="971"/>
    </location>
</feature>
<feature type="region of interest" description="Disordered" evidence="5">
    <location>
        <begin position="1224"/>
        <end position="1281"/>
    </location>
</feature>
<feature type="compositionally biased region" description="Polar residues" evidence="5">
    <location>
        <begin position="21"/>
        <end position="32"/>
    </location>
</feature>
<feature type="compositionally biased region" description="Low complexity" evidence="5">
    <location>
        <begin position="294"/>
        <end position="323"/>
    </location>
</feature>
<feature type="compositionally biased region" description="Low complexity" evidence="5">
    <location>
        <begin position="440"/>
        <end position="458"/>
    </location>
</feature>
<feature type="compositionally biased region" description="Polar residues" evidence="5">
    <location>
        <begin position="671"/>
        <end position="685"/>
    </location>
</feature>
<feature type="compositionally biased region" description="Basic and acidic residues" evidence="5">
    <location>
        <begin position="934"/>
        <end position="948"/>
    </location>
</feature>
<feature type="compositionally biased region" description="Basic and acidic residues" evidence="5">
    <location>
        <begin position="1234"/>
        <end position="1247"/>
    </location>
</feature>
<feature type="compositionally biased region" description="Basic residues" evidence="5">
    <location>
        <begin position="1248"/>
        <end position="1258"/>
    </location>
</feature>
<feature type="compositionally biased region" description="Polar residues" evidence="5">
    <location>
        <begin position="1264"/>
        <end position="1273"/>
    </location>
</feature>
<feature type="splice variant" id="VSP_016024" description="In isoform 2." evidence="8">
    <location>
        <begin position="932"/>
        <end position="1189"/>
    </location>
</feature>
<feature type="sequence variant" id="VAR_054220" description="In dbSNP:rs3810320.">
    <original>P</original>
    <variation>S</variation>
    <location>
        <position position="486"/>
    </location>
</feature>
<feature type="sequence variant" id="VAR_035717" description="In a breast cancer sample; somatic mutation." evidence="6">
    <original>S</original>
    <variation>L</variation>
    <location>
        <position position="712"/>
    </location>
</feature>
<feature type="sequence variant" id="VAR_054221" description="In dbSNP:rs34984302.">
    <original>K</original>
    <variation>E</variation>
    <location>
        <position position="791"/>
    </location>
</feature>
<feature type="sequence variant" id="VAR_054222" description="In dbSNP:rs3826835.">
    <original>T</original>
    <variation>S</variation>
    <location>
        <position position="795"/>
    </location>
</feature>
<feature type="sequence conflict" description="In Ref. 2; CAD38720." evidence="9" ref="2">
    <original>P</original>
    <variation>A</variation>
    <location>
        <position position="473"/>
    </location>
</feature>
<gene>
    <name type="primary">ZNF541</name>
</gene>
<sequence length="1346" mass="145587">MDQYSLGDEGALPSEMHLPSFSESQGLNCSDTLNRDLGPNTRGFLYAGLSGLDPDPSLPTPDMSSEVLEDNLDTLSLYSGKDSDSVKLLEEYADSESQASLQDLGLGVLKAKEADEGGRATSGSARKGKRQHSSPQNPLLDCSLCGKVFSSASSLSKHYLTHSQERKHVCKICSKAFKRQDHLTGHMLTHQKTKPFVCIEQGCSKSYCDYRSLRRHYEVHHGLCILKEAPPEEEACGDSPHAHESAGQPPPSSLRSLVPPEARSPGSLLPHRDLLRRIVSSIVHQKTPSPGPAPAGASDSEGRNTACPCPASSGSSSCTPAGPHAAPAALDTELPEEPCLPQKEPATDVFTAPNSRAAENGAPDPPEPEPDTALLQARSTAECWPEGGSVPACLPLFRGQTVPASSQPSSHSFQWLRNLPGCPKSKGNNVFVVHKPSAVPSREGSESGPGPSSGSPSEESPPGPGGGLEDALPFPAALLRVPAEAPSDPRSASGEDDPCAPKKVKVDCDSFLCQNPGEPGLQEAQKAGGLPADASPLFRQLFLKSQEPLVSHEQMQVFQMITKSQRIFSHAQVAAVSSQLPAPEGKPAALRPLQGPWPQQPPPLAPAVDSLHAGPGNPEAEGSPARRRKTTPGVPREASPGSTRRDAKGGLKVAAVPTPLAAPSLDPSRNPDISSLAKQLRSSKGTLDLEDIFPSTGQRQTQLGGEEPPGASLPGKQAPAENGAASRITKGEKGPACSRGGGYRLLGNPRAPRFSGFRKEKAKMDMCCAASPSQVAMASFSSAGPPADPSKSKLTIFSRIQGGNIYRLPHPVKEENVAGRGNQQNGSPTDWTKPRSTFVCKNCSQMFYTEKGLSSHMCFHSDQWPSPRGKQEPQVFGTEFCKPLRQVLRPEGDRHSPPGTKKPLDPTAAAPLVVPQSIPVVPVTRHIGSMAMGQEKDGEERDSKESSQQRKRKKRPPPSTAGEPGPAGCHQSRLRSPMFLVDCLLKGLFQCSPYTPPPMLSPIREGSGVYFNTLCSTSTQASPDQLISSMLDQVDGSFGICVVKDDTKISIEPHINIGSRFQAEIPELQERSLAGTDEHVASLVWKPWGDMMISSETQDRVTELCNVACSSVMPGGGTNLELALHCLHEAQGNVQVALETLLLRGPHKPRTHLLADYRYTGSDVWTPIEKRLFKKAFYAHKKDFYLIHKMIQTKTVAQCVEYYYIWKKMIKFDCGRAPGLEKRVKREPEEVERTEEKVPCSPRERPSHHPTPKLKTKSYRRESILSSSPNAGSKRTPELLGSAESQGIFPCRECERVFDKIKSRNAHMKRHRLQDHVEPIIRVKWPVKPFQLKEEELGADIGPLQW</sequence>
<evidence type="ECO:0000250" key="1">
    <source>
        <dbReference type="UniProtKB" id="Q0GGX2"/>
    </source>
</evidence>
<evidence type="ECO:0000255" key="2">
    <source>
        <dbReference type="PROSITE-ProRule" id="PRU00042"/>
    </source>
</evidence>
<evidence type="ECO:0000255" key="3">
    <source>
        <dbReference type="PROSITE-ProRule" id="PRU00512"/>
    </source>
</evidence>
<evidence type="ECO:0000255" key="4">
    <source>
        <dbReference type="PROSITE-ProRule" id="PRU00624"/>
    </source>
</evidence>
<evidence type="ECO:0000256" key="5">
    <source>
        <dbReference type="SAM" id="MobiDB-lite"/>
    </source>
</evidence>
<evidence type="ECO:0000269" key="6">
    <source>
    </source>
</evidence>
<evidence type="ECO:0000269" key="7">
    <source>
    </source>
</evidence>
<evidence type="ECO:0000303" key="8">
    <source>
    </source>
</evidence>
<evidence type="ECO:0000305" key="9"/>